<dbReference type="EC" id="2.1.2.1" evidence="1"/>
<dbReference type="EMBL" id="CP001321">
    <property type="protein sequence ID" value="ACL32059.1"/>
    <property type="molecule type" value="Genomic_DNA"/>
</dbReference>
<dbReference type="RefSeq" id="WP_012621704.1">
    <property type="nucleotide sequence ID" value="NC_011852.1"/>
</dbReference>
<dbReference type="SMR" id="B8F407"/>
<dbReference type="STRING" id="557723.HAPS_0379"/>
<dbReference type="KEGG" id="hap:HAPS_0379"/>
<dbReference type="PATRIC" id="fig|557723.8.peg.385"/>
<dbReference type="HOGENOM" id="CLU_022477_2_1_6"/>
<dbReference type="UniPathway" id="UPA00193"/>
<dbReference type="UniPathway" id="UPA00288">
    <property type="reaction ID" value="UER01023"/>
</dbReference>
<dbReference type="Proteomes" id="UP000006743">
    <property type="component" value="Chromosome"/>
</dbReference>
<dbReference type="GO" id="GO:0005829">
    <property type="term" value="C:cytosol"/>
    <property type="evidence" value="ECO:0007669"/>
    <property type="project" value="TreeGrafter"/>
</dbReference>
<dbReference type="GO" id="GO:0004372">
    <property type="term" value="F:glycine hydroxymethyltransferase activity"/>
    <property type="evidence" value="ECO:0007669"/>
    <property type="project" value="UniProtKB-UniRule"/>
</dbReference>
<dbReference type="GO" id="GO:0030170">
    <property type="term" value="F:pyridoxal phosphate binding"/>
    <property type="evidence" value="ECO:0007669"/>
    <property type="project" value="UniProtKB-UniRule"/>
</dbReference>
<dbReference type="GO" id="GO:0019264">
    <property type="term" value="P:glycine biosynthetic process from serine"/>
    <property type="evidence" value="ECO:0007669"/>
    <property type="project" value="UniProtKB-UniRule"/>
</dbReference>
<dbReference type="GO" id="GO:0035999">
    <property type="term" value="P:tetrahydrofolate interconversion"/>
    <property type="evidence" value="ECO:0007669"/>
    <property type="project" value="UniProtKB-UniRule"/>
</dbReference>
<dbReference type="CDD" id="cd00378">
    <property type="entry name" value="SHMT"/>
    <property type="match status" value="1"/>
</dbReference>
<dbReference type="FunFam" id="3.40.640.10:FF:000001">
    <property type="entry name" value="Serine hydroxymethyltransferase"/>
    <property type="match status" value="1"/>
</dbReference>
<dbReference type="FunFam" id="3.90.1150.10:FF:000003">
    <property type="entry name" value="Serine hydroxymethyltransferase"/>
    <property type="match status" value="1"/>
</dbReference>
<dbReference type="Gene3D" id="3.90.1150.10">
    <property type="entry name" value="Aspartate Aminotransferase, domain 1"/>
    <property type="match status" value="1"/>
</dbReference>
<dbReference type="Gene3D" id="3.40.640.10">
    <property type="entry name" value="Type I PLP-dependent aspartate aminotransferase-like (Major domain)"/>
    <property type="match status" value="1"/>
</dbReference>
<dbReference type="HAMAP" id="MF_00051">
    <property type="entry name" value="SHMT"/>
    <property type="match status" value="1"/>
</dbReference>
<dbReference type="InterPro" id="IPR015424">
    <property type="entry name" value="PyrdxlP-dep_Trfase"/>
</dbReference>
<dbReference type="InterPro" id="IPR015421">
    <property type="entry name" value="PyrdxlP-dep_Trfase_major"/>
</dbReference>
<dbReference type="InterPro" id="IPR015422">
    <property type="entry name" value="PyrdxlP-dep_Trfase_small"/>
</dbReference>
<dbReference type="InterPro" id="IPR001085">
    <property type="entry name" value="Ser_HO-MeTrfase"/>
</dbReference>
<dbReference type="InterPro" id="IPR049943">
    <property type="entry name" value="Ser_HO-MeTrfase-like"/>
</dbReference>
<dbReference type="InterPro" id="IPR019798">
    <property type="entry name" value="Ser_HO-MeTrfase_PLP_BS"/>
</dbReference>
<dbReference type="InterPro" id="IPR039429">
    <property type="entry name" value="SHMT-like_dom"/>
</dbReference>
<dbReference type="NCBIfam" id="NF000586">
    <property type="entry name" value="PRK00011.1"/>
    <property type="match status" value="1"/>
</dbReference>
<dbReference type="PANTHER" id="PTHR11680">
    <property type="entry name" value="SERINE HYDROXYMETHYLTRANSFERASE"/>
    <property type="match status" value="1"/>
</dbReference>
<dbReference type="PANTHER" id="PTHR11680:SF50">
    <property type="entry name" value="SERINE HYDROXYMETHYLTRANSFERASE"/>
    <property type="match status" value="1"/>
</dbReference>
<dbReference type="Pfam" id="PF00464">
    <property type="entry name" value="SHMT"/>
    <property type="match status" value="1"/>
</dbReference>
<dbReference type="PIRSF" id="PIRSF000412">
    <property type="entry name" value="SHMT"/>
    <property type="match status" value="1"/>
</dbReference>
<dbReference type="SUPFAM" id="SSF53383">
    <property type="entry name" value="PLP-dependent transferases"/>
    <property type="match status" value="1"/>
</dbReference>
<dbReference type="PROSITE" id="PS00096">
    <property type="entry name" value="SHMT"/>
    <property type="match status" value="1"/>
</dbReference>
<accession>B8F407</accession>
<feature type="chain" id="PRO_1000117638" description="Serine hydroxymethyltransferase">
    <location>
        <begin position="1"/>
        <end position="420"/>
    </location>
</feature>
<feature type="binding site" evidence="1">
    <location>
        <position position="121"/>
    </location>
    <ligand>
        <name>(6S)-5,6,7,8-tetrahydrofolate</name>
        <dbReference type="ChEBI" id="CHEBI:57453"/>
    </ligand>
</feature>
<feature type="binding site" evidence="1">
    <location>
        <begin position="125"/>
        <end position="127"/>
    </location>
    <ligand>
        <name>(6S)-5,6,7,8-tetrahydrofolate</name>
        <dbReference type="ChEBI" id="CHEBI:57453"/>
    </ligand>
</feature>
<feature type="site" description="Plays an important role in substrate specificity" evidence="1">
    <location>
        <position position="228"/>
    </location>
</feature>
<feature type="modified residue" description="N6-(pyridoxal phosphate)lysine" evidence="1">
    <location>
        <position position="229"/>
    </location>
</feature>
<comment type="function">
    <text evidence="1">Catalyzes the reversible interconversion of serine and glycine with tetrahydrofolate (THF) serving as the one-carbon carrier. This reaction serves as the major source of one-carbon groups required for the biosynthesis of purines, thymidylate, methionine, and other important biomolecules. Also exhibits THF-independent aldolase activity toward beta-hydroxyamino acids, producing glycine and aldehydes, via a retro-aldol mechanism.</text>
</comment>
<comment type="catalytic activity">
    <reaction evidence="1">
        <text>(6R)-5,10-methylene-5,6,7,8-tetrahydrofolate + glycine + H2O = (6S)-5,6,7,8-tetrahydrofolate + L-serine</text>
        <dbReference type="Rhea" id="RHEA:15481"/>
        <dbReference type="ChEBI" id="CHEBI:15377"/>
        <dbReference type="ChEBI" id="CHEBI:15636"/>
        <dbReference type="ChEBI" id="CHEBI:33384"/>
        <dbReference type="ChEBI" id="CHEBI:57305"/>
        <dbReference type="ChEBI" id="CHEBI:57453"/>
        <dbReference type="EC" id="2.1.2.1"/>
    </reaction>
</comment>
<comment type="cofactor">
    <cofactor evidence="1">
        <name>pyridoxal 5'-phosphate</name>
        <dbReference type="ChEBI" id="CHEBI:597326"/>
    </cofactor>
</comment>
<comment type="pathway">
    <text evidence="1">One-carbon metabolism; tetrahydrofolate interconversion.</text>
</comment>
<comment type="pathway">
    <text evidence="1">Amino-acid biosynthesis; glycine biosynthesis; glycine from L-serine: step 1/1.</text>
</comment>
<comment type="subunit">
    <text evidence="1">Homodimer.</text>
</comment>
<comment type="subcellular location">
    <subcellularLocation>
        <location evidence="1">Cytoplasm</location>
    </subcellularLocation>
</comment>
<comment type="similarity">
    <text evidence="1">Belongs to the SHMT family.</text>
</comment>
<protein>
    <recommendedName>
        <fullName evidence="1">Serine hydroxymethyltransferase</fullName>
        <shortName evidence="1">SHMT</shortName>
        <shortName evidence="1">Serine methylase</shortName>
        <ecNumber evidence="1">2.1.2.1</ecNumber>
    </recommendedName>
</protein>
<proteinExistence type="inferred from homology"/>
<sequence>MLRRDMNIADYDPELWQAIQGENRRQEEHIELIASENYASPRVMEAQGSQFTNKYAEGYPGKRYYGGCEYADIVEQLAIERAKELFGADYANVQPHSGSQANAAVYGALLMPGDTILGMSLAHGGHLTHGASVSFSGKVYHAEQYGITAEGVIDYDALRKQAHEVKPKMIVGGFSAYSQIVDWAKMREIADEVGAYLFVDMAHVAGLIAAGVYPSPLPHAHVVTTTTHKTLAGPRGGLILSNAKDEEIYKKLQNAVFPREQGGPLVHIIAAKAVCFKEALEPEYKVYQQQVVKNAKAMVEVFKQRGYNVVSNGTENHLFLVDLVSHGLTGKAADAALGKANITVNKNAVPNDPQKPFITSGIRVGTPSVTRRGFKEAEVRELAGWMCDVLDNIGKDNEAAVIEATKVKVLDICKRLPVYP</sequence>
<name>GLYA_GLAP5</name>
<evidence type="ECO:0000255" key="1">
    <source>
        <dbReference type="HAMAP-Rule" id="MF_00051"/>
    </source>
</evidence>
<organism>
    <name type="scientific">Glaesserella parasuis serovar 5 (strain SH0165)</name>
    <name type="common">Haemophilus parasuis</name>
    <dbReference type="NCBI Taxonomy" id="557723"/>
    <lineage>
        <taxon>Bacteria</taxon>
        <taxon>Pseudomonadati</taxon>
        <taxon>Pseudomonadota</taxon>
        <taxon>Gammaproteobacteria</taxon>
        <taxon>Pasteurellales</taxon>
        <taxon>Pasteurellaceae</taxon>
        <taxon>Glaesserella</taxon>
    </lineage>
</organism>
<keyword id="KW-0028">Amino-acid biosynthesis</keyword>
<keyword id="KW-0963">Cytoplasm</keyword>
<keyword id="KW-0554">One-carbon metabolism</keyword>
<keyword id="KW-0663">Pyridoxal phosphate</keyword>
<keyword id="KW-1185">Reference proteome</keyword>
<keyword id="KW-0808">Transferase</keyword>
<reference key="1">
    <citation type="journal article" date="2009" name="J. Bacteriol.">
        <title>Complete genome sequence of Haemophilus parasuis SH0165.</title>
        <authorList>
            <person name="Yue M."/>
            <person name="Yang F."/>
            <person name="Yang J."/>
            <person name="Bei W."/>
            <person name="Cai X."/>
            <person name="Chen L."/>
            <person name="Dong J."/>
            <person name="Zhou R."/>
            <person name="Jin M."/>
            <person name="Jin Q."/>
            <person name="Chen H."/>
        </authorList>
    </citation>
    <scope>NUCLEOTIDE SEQUENCE [LARGE SCALE GENOMIC DNA]</scope>
    <source>
        <strain>SH0165</strain>
    </source>
</reference>
<gene>
    <name evidence="1" type="primary">glyA</name>
    <name type="ordered locus">HAPS_0379</name>
</gene>